<proteinExistence type="inferred from homology"/>
<gene>
    <name evidence="1" type="primary">rpoB</name>
    <name type="ordered locus">PEPE_1426</name>
</gene>
<feature type="chain" id="PRO_0000300365" description="DNA-directed RNA polymerase subunit beta">
    <location>
        <begin position="1"/>
        <end position="1202"/>
    </location>
</feature>
<feature type="region of interest" description="Disordered" evidence="2">
    <location>
        <begin position="1151"/>
        <end position="1202"/>
    </location>
</feature>
<feature type="compositionally biased region" description="Acidic residues" evidence="2">
    <location>
        <begin position="1151"/>
        <end position="1162"/>
    </location>
</feature>
<feature type="compositionally biased region" description="Polar residues" evidence="2">
    <location>
        <begin position="1189"/>
        <end position="1202"/>
    </location>
</feature>
<accession>Q03EA9</accession>
<reference key="1">
    <citation type="journal article" date="2006" name="Proc. Natl. Acad. Sci. U.S.A.">
        <title>Comparative genomics of the lactic acid bacteria.</title>
        <authorList>
            <person name="Makarova K.S."/>
            <person name="Slesarev A."/>
            <person name="Wolf Y.I."/>
            <person name="Sorokin A."/>
            <person name="Mirkin B."/>
            <person name="Koonin E.V."/>
            <person name="Pavlov A."/>
            <person name="Pavlova N."/>
            <person name="Karamychev V."/>
            <person name="Polouchine N."/>
            <person name="Shakhova V."/>
            <person name="Grigoriev I."/>
            <person name="Lou Y."/>
            <person name="Rohksar D."/>
            <person name="Lucas S."/>
            <person name="Huang K."/>
            <person name="Goodstein D.M."/>
            <person name="Hawkins T."/>
            <person name="Plengvidhya V."/>
            <person name="Welker D."/>
            <person name="Hughes J."/>
            <person name="Goh Y."/>
            <person name="Benson A."/>
            <person name="Baldwin K."/>
            <person name="Lee J.-H."/>
            <person name="Diaz-Muniz I."/>
            <person name="Dosti B."/>
            <person name="Smeianov V."/>
            <person name="Wechter W."/>
            <person name="Barabote R."/>
            <person name="Lorca G."/>
            <person name="Altermann E."/>
            <person name="Barrangou R."/>
            <person name="Ganesan B."/>
            <person name="Xie Y."/>
            <person name="Rawsthorne H."/>
            <person name="Tamir D."/>
            <person name="Parker C."/>
            <person name="Breidt F."/>
            <person name="Broadbent J.R."/>
            <person name="Hutkins R."/>
            <person name="O'Sullivan D."/>
            <person name="Steele J."/>
            <person name="Unlu G."/>
            <person name="Saier M.H. Jr."/>
            <person name="Klaenhammer T."/>
            <person name="Richardson P."/>
            <person name="Kozyavkin S."/>
            <person name="Weimer B.C."/>
            <person name="Mills D.A."/>
        </authorList>
    </citation>
    <scope>NUCLEOTIDE SEQUENCE [LARGE SCALE GENOMIC DNA]</scope>
    <source>
        <strain>ATCC 25745 / CCUG 21536 / LMG 10740 / 183-1w</strain>
    </source>
</reference>
<organism>
    <name type="scientific">Pediococcus pentosaceus (strain ATCC 25745 / CCUG 21536 / LMG 10740 / 183-1w)</name>
    <dbReference type="NCBI Taxonomy" id="278197"/>
    <lineage>
        <taxon>Bacteria</taxon>
        <taxon>Bacillati</taxon>
        <taxon>Bacillota</taxon>
        <taxon>Bacilli</taxon>
        <taxon>Lactobacillales</taxon>
        <taxon>Lactobacillaceae</taxon>
        <taxon>Pediococcus</taxon>
    </lineage>
</organism>
<dbReference type="EC" id="2.7.7.6" evidence="1"/>
<dbReference type="EMBL" id="CP000422">
    <property type="protein sequence ID" value="ABJ68463.1"/>
    <property type="molecule type" value="Genomic_DNA"/>
</dbReference>
<dbReference type="RefSeq" id="WP_002833322.1">
    <property type="nucleotide sequence ID" value="NC_008525.1"/>
</dbReference>
<dbReference type="SMR" id="Q03EA9"/>
<dbReference type="STRING" id="278197.PEPE_1426"/>
<dbReference type="GeneID" id="33061584"/>
<dbReference type="KEGG" id="ppe:PEPE_1426"/>
<dbReference type="eggNOG" id="COG0085">
    <property type="taxonomic scope" value="Bacteria"/>
</dbReference>
<dbReference type="HOGENOM" id="CLU_000524_4_1_9"/>
<dbReference type="OrthoDB" id="9803954at2"/>
<dbReference type="Proteomes" id="UP000000773">
    <property type="component" value="Chromosome"/>
</dbReference>
<dbReference type="GO" id="GO:0000428">
    <property type="term" value="C:DNA-directed RNA polymerase complex"/>
    <property type="evidence" value="ECO:0007669"/>
    <property type="project" value="UniProtKB-KW"/>
</dbReference>
<dbReference type="GO" id="GO:0003677">
    <property type="term" value="F:DNA binding"/>
    <property type="evidence" value="ECO:0007669"/>
    <property type="project" value="UniProtKB-UniRule"/>
</dbReference>
<dbReference type="GO" id="GO:0003899">
    <property type="term" value="F:DNA-directed RNA polymerase activity"/>
    <property type="evidence" value="ECO:0007669"/>
    <property type="project" value="UniProtKB-UniRule"/>
</dbReference>
<dbReference type="GO" id="GO:0032549">
    <property type="term" value="F:ribonucleoside binding"/>
    <property type="evidence" value="ECO:0007669"/>
    <property type="project" value="InterPro"/>
</dbReference>
<dbReference type="GO" id="GO:0006351">
    <property type="term" value="P:DNA-templated transcription"/>
    <property type="evidence" value="ECO:0007669"/>
    <property type="project" value="UniProtKB-UniRule"/>
</dbReference>
<dbReference type="CDD" id="cd00653">
    <property type="entry name" value="RNA_pol_B_RPB2"/>
    <property type="match status" value="1"/>
</dbReference>
<dbReference type="FunFam" id="3.90.1800.10:FF:000001">
    <property type="entry name" value="DNA-directed RNA polymerase subunit beta"/>
    <property type="match status" value="1"/>
</dbReference>
<dbReference type="Gene3D" id="2.40.50.100">
    <property type="match status" value="1"/>
</dbReference>
<dbReference type="Gene3D" id="2.40.50.150">
    <property type="match status" value="1"/>
</dbReference>
<dbReference type="Gene3D" id="3.90.1100.10">
    <property type="match status" value="2"/>
</dbReference>
<dbReference type="Gene3D" id="2.30.150.10">
    <property type="entry name" value="DNA-directed RNA polymerase, beta subunit, external 1 domain"/>
    <property type="match status" value="1"/>
</dbReference>
<dbReference type="Gene3D" id="2.40.270.10">
    <property type="entry name" value="DNA-directed RNA polymerase, subunit 2, domain 6"/>
    <property type="match status" value="1"/>
</dbReference>
<dbReference type="Gene3D" id="3.90.1800.10">
    <property type="entry name" value="RNA polymerase alpha subunit dimerisation domain"/>
    <property type="match status" value="1"/>
</dbReference>
<dbReference type="Gene3D" id="3.90.1110.10">
    <property type="entry name" value="RNA polymerase Rpb2, domain 2"/>
    <property type="match status" value="1"/>
</dbReference>
<dbReference type="HAMAP" id="MF_01321">
    <property type="entry name" value="RNApol_bact_RpoB"/>
    <property type="match status" value="1"/>
</dbReference>
<dbReference type="InterPro" id="IPR042107">
    <property type="entry name" value="DNA-dir_RNA_pol_bsu_ext_1_sf"/>
</dbReference>
<dbReference type="InterPro" id="IPR019462">
    <property type="entry name" value="DNA-dir_RNA_pol_bsu_external_1"/>
</dbReference>
<dbReference type="InterPro" id="IPR015712">
    <property type="entry name" value="DNA-dir_RNA_pol_su2"/>
</dbReference>
<dbReference type="InterPro" id="IPR007120">
    <property type="entry name" value="DNA-dir_RNAP_su2_dom"/>
</dbReference>
<dbReference type="InterPro" id="IPR037033">
    <property type="entry name" value="DNA-dir_RNAP_su2_hyb_sf"/>
</dbReference>
<dbReference type="InterPro" id="IPR010243">
    <property type="entry name" value="RNA_pol_bsu_bac"/>
</dbReference>
<dbReference type="InterPro" id="IPR007121">
    <property type="entry name" value="RNA_pol_bsu_CS"/>
</dbReference>
<dbReference type="InterPro" id="IPR007644">
    <property type="entry name" value="RNA_pol_bsu_protrusion"/>
</dbReference>
<dbReference type="InterPro" id="IPR007642">
    <property type="entry name" value="RNA_pol_Rpb2_2"/>
</dbReference>
<dbReference type="InterPro" id="IPR037034">
    <property type="entry name" value="RNA_pol_Rpb2_2_sf"/>
</dbReference>
<dbReference type="InterPro" id="IPR007645">
    <property type="entry name" value="RNA_pol_Rpb2_3"/>
</dbReference>
<dbReference type="InterPro" id="IPR007641">
    <property type="entry name" value="RNA_pol_Rpb2_7"/>
</dbReference>
<dbReference type="InterPro" id="IPR014724">
    <property type="entry name" value="RNA_pol_RPB2_OB-fold"/>
</dbReference>
<dbReference type="NCBIfam" id="NF001616">
    <property type="entry name" value="PRK00405.1"/>
    <property type="match status" value="1"/>
</dbReference>
<dbReference type="NCBIfam" id="TIGR02013">
    <property type="entry name" value="rpoB"/>
    <property type="match status" value="1"/>
</dbReference>
<dbReference type="PANTHER" id="PTHR20856">
    <property type="entry name" value="DNA-DIRECTED RNA POLYMERASE I SUBUNIT 2"/>
    <property type="match status" value="1"/>
</dbReference>
<dbReference type="Pfam" id="PF04563">
    <property type="entry name" value="RNA_pol_Rpb2_1"/>
    <property type="match status" value="1"/>
</dbReference>
<dbReference type="Pfam" id="PF04561">
    <property type="entry name" value="RNA_pol_Rpb2_2"/>
    <property type="match status" value="2"/>
</dbReference>
<dbReference type="Pfam" id="PF04565">
    <property type="entry name" value="RNA_pol_Rpb2_3"/>
    <property type="match status" value="1"/>
</dbReference>
<dbReference type="Pfam" id="PF10385">
    <property type="entry name" value="RNA_pol_Rpb2_45"/>
    <property type="match status" value="1"/>
</dbReference>
<dbReference type="Pfam" id="PF00562">
    <property type="entry name" value="RNA_pol_Rpb2_6"/>
    <property type="match status" value="1"/>
</dbReference>
<dbReference type="Pfam" id="PF04560">
    <property type="entry name" value="RNA_pol_Rpb2_7"/>
    <property type="match status" value="1"/>
</dbReference>
<dbReference type="SUPFAM" id="SSF64484">
    <property type="entry name" value="beta and beta-prime subunits of DNA dependent RNA-polymerase"/>
    <property type="match status" value="1"/>
</dbReference>
<dbReference type="PROSITE" id="PS01166">
    <property type="entry name" value="RNA_POL_BETA"/>
    <property type="match status" value="1"/>
</dbReference>
<sequence length="1202" mass="134620">MAGHLVKYGKHRTRRSYARIKEVLDLPNLIEIQSDSYQWFLDEGLREMFNDIMPIEDFAGKLSLEFVDYQLLEPKYTVDEAREHEANYSAPLHVTLRLTNHETGEIKSQDVFFGDFPLMTEQGTFIINGAERVIVSQLVRSPGVYYNLDTDKNNRKIWGTTVIPNRGAWLEYETDAKEISYVRIDRTRKIPMTELVRALGFGSDEEIIDIFGGSDSLDFTLDKDVHKNPEDSRVAESLKDIYERLRPGEPKTADSSRSLLTARFFDPKRYDMAPVGRYKVNKKLSLKTRLLGQTLAETLADPDTGEVIAQKGEMVNKDVMKKLAVFLDRPDFKMVTYQPSEEAVVTEPMTIQVIKVQDPNDPERTLNMIGNGNIDAKLKHITPADIIASMNYFFLLQDGIGSTDDIDHLGNRRIRSVGELLQNQFRIGLSRMERVVRERMSIQDAETVTPQQLINIRPVVAATKEFFGSSQLSQFMDQTNPLGELSHKRRLSALGPGGLTRDRAGYEVRDVHYTHYGRMCPIETPEGPNIGLINNLASYGKINRYGFIETPYRRVSWEDHKVTDRIDYLTADEEDQFVIAQANSPLNDDGSFADDVVMARHESDNIETSIENVDYMDVSPKQVVAVATACIPFLENDDSNRALMGANMQRQAVPLVDPHSPLIGTGIEYKAAHDSGVALLCQHAGVVEYVDAREVRVRRDDGALDTYKLMKFRRSNGGKNYNQRPIVRVNDKVDADEVLADGPSMEQGELALGQNPLIAFMTWQGYNFEDAIAINERLVRDDVYTSIHIEEYESEARDTKLGPEEMTREIPNIGEDALRNLDQDGIVRVGAEVEDGDILVGKVTPKGVTELSAEERLLHAIFGEKAREVRDTSLRVPHGGGGIVQDVKIFTRENGDELSPGVNMMVRVYIAQKRKLQVGDKMAGRHGNKGTVSVVIPQEDMPYMPDGTPIDIMLSPMGVPSRMNIGQVLELHLGMAARNLGIHMTTPVFDGAQDKDIWEAVAEAGMDSDAKSVLYDGRTGEPFEQRVAVGVMHYMKLAHMVDDKIHARSIGPYSLVTQQPLGGKAQFGGQRFGEMEVWALEAYGAAYTLQEILTYKSDDVVGRVKTYEAIVKGEPIPRPGVPESFRVLVKELQALGLDMKVLGGDDQEVELRDMDEEDDDVVNVDALSKYAEKQNEKTNASAEEAKAPSTESAPVETKNNQN</sequence>
<name>RPOB_PEDPA</name>
<evidence type="ECO:0000255" key="1">
    <source>
        <dbReference type="HAMAP-Rule" id="MF_01321"/>
    </source>
</evidence>
<evidence type="ECO:0000256" key="2">
    <source>
        <dbReference type="SAM" id="MobiDB-lite"/>
    </source>
</evidence>
<keyword id="KW-0240">DNA-directed RNA polymerase</keyword>
<keyword id="KW-0548">Nucleotidyltransferase</keyword>
<keyword id="KW-0804">Transcription</keyword>
<keyword id="KW-0808">Transferase</keyword>
<comment type="function">
    <text evidence="1">DNA-dependent RNA polymerase catalyzes the transcription of DNA into RNA using the four ribonucleoside triphosphates as substrates.</text>
</comment>
<comment type="catalytic activity">
    <reaction evidence="1">
        <text>RNA(n) + a ribonucleoside 5'-triphosphate = RNA(n+1) + diphosphate</text>
        <dbReference type="Rhea" id="RHEA:21248"/>
        <dbReference type="Rhea" id="RHEA-COMP:14527"/>
        <dbReference type="Rhea" id="RHEA-COMP:17342"/>
        <dbReference type="ChEBI" id="CHEBI:33019"/>
        <dbReference type="ChEBI" id="CHEBI:61557"/>
        <dbReference type="ChEBI" id="CHEBI:140395"/>
        <dbReference type="EC" id="2.7.7.6"/>
    </reaction>
</comment>
<comment type="subunit">
    <text evidence="1">The RNAP catalytic core consists of 2 alpha, 1 beta, 1 beta' and 1 omega subunit. When a sigma factor is associated with the core the holoenzyme is formed, which can initiate transcription.</text>
</comment>
<comment type="similarity">
    <text evidence="1">Belongs to the RNA polymerase beta chain family.</text>
</comment>
<protein>
    <recommendedName>
        <fullName evidence="1">DNA-directed RNA polymerase subunit beta</fullName>
        <shortName evidence="1">RNAP subunit beta</shortName>
        <ecNumber evidence="1">2.7.7.6</ecNumber>
    </recommendedName>
    <alternativeName>
        <fullName evidence="1">RNA polymerase subunit beta</fullName>
    </alternativeName>
    <alternativeName>
        <fullName evidence="1">Transcriptase subunit beta</fullName>
    </alternativeName>
</protein>